<accession>P9WNJ4</accession>
<accession>L0T8P7</accession>
<accession>O05300</accession>
<dbReference type="EMBL" id="AE000516">
    <property type="protein sequence ID" value="AAK45493.1"/>
    <property type="molecule type" value="Genomic_DNA"/>
</dbReference>
<dbReference type="PIR" id="D70608">
    <property type="entry name" value="D70608"/>
</dbReference>
<dbReference type="RefSeq" id="WP_003917414.1">
    <property type="nucleotide sequence ID" value="NZ_KK341227.1"/>
</dbReference>
<dbReference type="SMR" id="P9WNJ4"/>
<dbReference type="KEGG" id="mtc:MT1236"/>
<dbReference type="PATRIC" id="fig|83331.31.peg.1335"/>
<dbReference type="HOGENOM" id="CLU_192559_0_0_11"/>
<dbReference type="Proteomes" id="UP000001020">
    <property type="component" value="Chromosome"/>
</dbReference>
<dbReference type="GO" id="GO:0005576">
    <property type="term" value="C:extracellular region"/>
    <property type="evidence" value="ECO:0007669"/>
    <property type="project" value="UniProtKB-SubCell"/>
</dbReference>
<dbReference type="FunFam" id="1.10.287.1060:FF:000004">
    <property type="entry name" value="ESAT-6-like protein EsxI"/>
    <property type="match status" value="1"/>
</dbReference>
<dbReference type="Gene3D" id="1.10.287.1060">
    <property type="entry name" value="ESAT-6-like"/>
    <property type="match status" value="1"/>
</dbReference>
<dbReference type="InterPro" id="IPR009416">
    <property type="entry name" value="ESAT-6-like_Myco"/>
</dbReference>
<dbReference type="InterPro" id="IPR036689">
    <property type="entry name" value="ESAT-6-like_sf"/>
</dbReference>
<dbReference type="InterPro" id="IPR010310">
    <property type="entry name" value="T7SS_ESAT-6-like"/>
</dbReference>
<dbReference type="Pfam" id="PF06013">
    <property type="entry name" value="WXG100"/>
    <property type="match status" value="1"/>
</dbReference>
<dbReference type="PIRSF" id="PIRSF037656">
    <property type="entry name" value="DUF1066"/>
    <property type="match status" value="1"/>
</dbReference>
<dbReference type="SUPFAM" id="SSF140453">
    <property type="entry name" value="EsxAB dimer-like"/>
    <property type="match status" value="1"/>
</dbReference>
<sequence length="94" mass="9854">MTINYQFGDVDAHGAMIRAQAGLLEAEHQAIVRDVLAAGDFWGGAGSAACQGFITQLGRNFQVIYEQANAHGQKVQAAGNNMAQTDSAVGSSWA</sequence>
<evidence type="ECO:0000250" key="1">
    <source>
        <dbReference type="UniProtKB" id="P9WNJ5"/>
    </source>
</evidence>
<evidence type="ECO:0000305" key="2"/>
<name>ESXL_MYCTO</name>
<gene>
    <name evidence="1" type="primary">esxL</name>
    <name type="ordered locus">MT1236</name>
</gene>
<feature type="chain" id="PRO_0000427116" description="ESAT-6-like protein EsxL">
    <location>
        <begin position="1"/>
        <end position="94"/>
    </location>
</feature>
<organism>
    <name type="scientific">Mycobacterium tuberculosis (strain CDC 1551 / Oshkosh)</name>
    <dbReference type="NCBI Taxonomy" id="83331"/>
    <lineage>
        <taxon>Bacteria</taxon>
        <taxon>Bacillati</taxon>
        <taxon>Actinomycetota</taxon>
        <taxon>Actinomycetes</taxon>
        <taxon>Mycobacteriales</taxon>
        <taxon>Mycobacteriaceae</taxon>
        <taxon>Mycobacterium</taxon>
        <taxon>Mycobacterium tuberculosis complex</taxon>
    </lineage>
</organism>
<proteinExistence type="inferred from homology"/>
<reference key="1">
    <citation type="journal article" date="2002" name="J. Bacteriol.">
        <title>Whole-genome comparison of Mycobacterium tuberculosis clinical and laboratory strains.</title>
        <authorList>
            <person name="Fleischmann R.D."/>
            <person name="Alland D."/>
            <person name="Eisen J.A."/>
            <person name="Carpenter L."/>
            <person name="White O."/>
            <person name="Peterson J.D."/>
            <person name="DeBoy R.T."/>
            <person name="Dodson R.J."/>
            <person name="Gwinn M.L."/>
            <person name="Haft D.H."/>
            <person name="Hickey E.K."/>
            <person name="Kolonay J.F."/>
            <person name="Nelson W.C."/>
            <person name="Umayam L.A."/>
            <person name="Ermolaeva M.D."/>
            <person name="Salzberg S.L."/>
            <person name="Delcher A."/>
            <person name="Utterback T.R."/>
            <person name="Weidman J.F."/>
            <person name="Khouri H.M."/>
            <person name="Gill J."/>
            <person name="Mikula A."/>
            <person name="Bishai W."/>
            <person name="Jacobs W.R. Jr."/>
            <person name="Venter J.C."/>
            <person name="Fraser C.M."/>
        </authorList>
    </citation>
    <scope>NUCLEOTIDE SEQUENCE [LARGE SCALE GENOMIC DNA]</scope>
    <source>
        <strain>CDC 1551 / Oshkosh</strain>
    </source>
</reference>
<protein>
    <recommendedName>
        <fullName evidence="1">ESAT-6-like protein EsxL</fullName>
    </recommendedName>
</protein>
<keyword id="KW-1185">Reference proteome</keyword>
<keyword id="KW-0964">Secreted</keyword>
<comment type="subunit">
    <text evidence="1">Strongly interacts with EsxK to form a heterodimeric complex under reducing conditions.</text>
</comment>
<comment type="subcellular location">
    <subcellularLocation>
        <location evidence="1">Secreted</location>
    </subcellularLocation>
    <text evidence="1">Probably secreted via the ESX-5 / type VII secretion system (T7SS).</text>
</comment>
<comment type="similarity">
    <text evidence="2">Belongs to the WXG100 family. ESAT-6 subfamily.</text>
</comment>